<organism>
    <name type="scientific">Meriones unguiculatus</name>
    <name type="common">Mongolian jird</name>
    <name type="synonym">Gerbillus unguiculatus</name>
    <dbReference type="NCBI Taxonomy" id="10047"/>
    <lineage>
        <taxon>Eukaryota</taxon>
        <taxon>Metazoa</taxon>
        <taxon>Chordata</taxon>
        <taxon>Craniata</taxon>
        <taxon>Vertebrata</taxon>
        <taxon>Euteleostomi</taxon>
        <taxon>Mammalia</taxon>
        <taxon>Eutheria</taxon>
        <taxon>Euarchontoglires</taxon>
        <taxon>Glires</taxon>
        <taxon>Rodentia</taxon>
        <taxon>Myomorpha</taxon>
        <taxon>Muroidea</taxon>
        <taxon>Muridae</taxon>
        <taxon>Gerbillinae</taxon>
        <taxon>Meriones</taxon>
    </lineage>
</organism>
<name>ADRB1_MERUN</name>
<sequence length="73" mass="8580">ISALVSFLPILMHWWRAENDEARRCYNDPKCCDFVTNRAYAIASSVVSFYVPLCIMAFVYLRVFREAQKQVKK</sequence>
<comment type="function">
    <text evidence="3 5">Beta-adrenergic receptors mediate the catecholamine-induced activation of adenylate cyclase through the action of G proteins. This receptor binds epinephrine and norepinephrine with approximately equal affinity. Mediates Ras activation through G(s)-alpha- and cAMP-mediated signaling (By similarity). In dorsal pons neurons, involved in the regulation of sleep/wake behaviors (By similarity).</text>
</comment>
<comment type="subunit">
    <text evidence="3">Interacts (via C-terminus PDZ motif) with RAPGEF2; the interaction is direct. Interacts with GOPC, MAGI3 and DLG4 (By similarity).</text>
</comment>
<comment type="subcellular location">
    <subcellularLocation>
        <location evidence="4">Cell membrane</location>
        <topology evidence="4">Multi-pass membrane protein</topology>
    </subcellularLocation>
    <subcellularLocation>
        <location evidence="1">Early endosome</location>
    </subcellularLocation>
    <text evidence="1">Colocalizes with RAPGEF2 at the plasma membrane. Found in the Golgi upon GOPC overexpression (By similarity).</text>
</comment>
<comment type="PTM">
    <text evidence="1">Homologous desensitization of the receptor is mediated by its phosphorylation by beta-adrenergic receptor kinase.</text>
</comment>
<comment type="similarity">
    <text evidence="7">Belongs to the G-protein coupled receptor 1 family. Adrenergic receptor subfamily. ADRB1 sub-subfamily.</text>
</comment>
<evidence type="ECO:0000250" key="1"/>
<evidence type="ECO:0000250" key="2">
    <source>
        <dbReference type="UniProtKB" id="P07700"/>
    </source>
</evidence>
<evidence type="ECO:0000250" key="3">
    <source>
        <dbReference type="UniProtKB" id="P08588"/>
    </source>
</evidence>
<evidence type="ECO:0000250" key="4">
    <source>
        <dbReference type="UniProtKB" id="P18090"/>
    </source>
</evidence>
<evidence type="ECO:0000250" key="5">
    <source>
        <dbReference type="UniProtKB" id="P34971"/>
    </source>
</evidence>
<evidence type="ECO:0000255" key="6"/>
<evidence type="ECO:0000255" key="7">
    <source>
        <dbReference type="PROSITE-ProRule" id="PRU00521"/>
    </source>
</evidence>
<protein>
    <recommendedName>
        <fullName>Beta-1 adrenergic receptor</fullName>
    </recommendedName>
    <alternativeName>
        <fullName>Beta-1 adrenoreceptor</fullName>
        <shortName>Beta-1 adrenoceptor</shortName>
    </alternativeName>
</protein>
<reference key="1">
    <citation type="journal article" date="1999" name="J. Membr. Biol.">
        <title>Beta1-adrenergic receptors but not beta2-adrenergic or vasopressin receptors regulate K+ secretion in vestibular dark cells of the inner ear.</title>
        <authorList>
            <person name="Wangemann P."/>
            <person name="Liu J."/>
            <person name="Shimozono M."/>
            <person name="Scofield M.A."/>
        </authorList>
    </citation>
    <scope>NUCLEOTIDE SEQUENCE [MRNA]</scope>
    <source>
        <tissue>Adipose tissue</tissue>
        <tissue>Brain</tissue>
        <tissue>Stria vascularis</tissue>
    </source>
</reference>
<keyword id="KW-1003">Cell membrane</keyword>
<keyword id="KW-1015">Disulfide bond</keyword>
<keyword id="KW-0967">Endosome</keyword>
<keyword id="KW-0297">G-protein coupled receptor</keyword>
<keyword id="KW-0472">Membrane</keyword>
<keyword id="KW-0675">Receptor</keyword>
<keyword id="KW-0807">Transducer</keyword>
<keyword id="KW-0812">Transmembrane</keyword>
<keyword id="KW-1133">Transmembrane helix</keyword>
<gene>
    <name type="primary">ADRB1</name>
</gene>
<feature type="chain" id="PRO_0000069121" description="Beta-1 adrenergic receptor">
    <location>
        <begin position="1" status="less than"/>
        <end position="73" status="greater than"/>
    </location>
</feature>
<feature type="transmembrane region" description="Helical; Name=4" evidence="6">
    <location>
        <begin position="1" status="less than"/>
        <end position="12"/>
    </location>
</feature>
<feature type="topological domain" description="Extracellular" evidence="1">
    <location>
        <begin position="13"/>
        <end position="38"/>
    </location>
</feature>
<feature type="transmembrane region" description="Helical; Name=5" evidence="1">
    <location>
        <begin position="39"/>
        <end position="64"/>
    </location>
</feature>
<feature type="topological domain" description="Cytoplasmic" evidence="1">
    <location>
        <begin position="65"/>
        <end position="73"/>
    </location>
</feature>
<feature type="binding site" evidence="2">
    <location>
        <position position="44"/>
    </location>
    <ligand>
        <name>cyanopindolol</name>
        <dbReference type="ChEBI" id="CHEBI:187894"/>
        <note>antagonist</note>
    </ligand>
</feature>
<feature type="disulfide bond" evidence="7">
    <location>
        <begin position="25"/>
        <end position="31"/>
    </location>
</feature>
<feature type="non-terminal residue">
    <location>
        <position position="1"/>
    </location>
</feature>
<feature type="non-terminal residue">
    <location>
        <position position="73"/>
    </location>
</feature>
<accession>O70430</accession>
<dbReference type="EMBL" id="AF055349">
    <property type="protein sequence ID" value="AAC12767.1"/>
    <property type="molecule type" value="mRNA"/>
</dbReference>
<dbReference type="SMR" id="O70430"/>
<dbReference type="GO" id="GO:0005769">
    <property type="term" value="C:early endosome"/>
    <property type="evidence" value="ECO:0000250"/>
    <property type="project" value="UniProtKB"/>
</dbReference>
<dbReference type="GO" id="GO:0005886">
    <property type="term" value="C:plasma membrane"/>
    <property type="evidence" value="ECO:0000250"/>
    <property type="project" value="UniProtKB"/>
</dbReference>
<dbReference type="GO" id="GO:0004940">
    <property type="term" value="F:beta1-adrenergic receptor activity"/>
    <property type="evidence" value="ECO:0000250"/>
    <property type="project" value="UniProtKB"/>
</dbReference>
<dbReference type="GO" id="GO:0071880">
    <property type="term" value="P:adenylate cyclase-activating adrenergic receptor signaling pathway"/>
    <property type="evidence" value="ECO:0000250"/>
    <property type="project" value="UniProtKB"/>
</dbReference>
<dbReference type="GO" id="GO:0002025">
    <property type="term" value="P:norepinephrine-epinephrine-mediated vasodilation involved in regulation of systemic arterial blood pressure"/>
    <property type="evidence" value="ECO:0007669"/>
    <property type="project" value="TreeGrafter"/>
</dbReference>
<dbReference type="GO" id="GO:0043410">
    <property type="term" value="P:positive regulation of MAPK cascade"/>
    <property type="evidence" value="ECO:0007669"/>
    <property type="project" value="TreeGrafter"/>
</dbReference>
<dbReference type="GO" id="GO:0045187">
    <property type="term" value="P:regulation of circadian sleep/wake cycle, sleep"/>
    <property type="evidence" value="ECO:0000250"/>
    <property type="project" value="UniProtKB"/>
</dbReference>
<dbReference type="Gene3D" id="1.20.1070.10">
    <property type="entry name" value="Rhodopsin 7-helix transmembrane proteins"/>
    <property type="match status" value="1"/>
</dbReference>
<dbReference type="InterPro" id="IPR000276">
    <property type="entry name" value="GPCR_Rhodpsn"/>
</dbReference>
<dbReference type="InterPro" id="IPR017452">
    <property type="entry name" value="GPCR_Rhodpsn_7TM"/>
</dbReference>
<dbReference type="PANTHER" id="PTHR24248">
    <property type="entry name" value="ADRENERGIC RECEPTOR-RELATED G-PROTEIN COUPLED RECEPTOR"/>
    <property type="match status" value="1"/>
</dbReference>
<dbReference type="PANTHER" id="PTHR24248:SF54">
    <property type="entry name" value="BETA-1 ADRENERGIC RECEPTOR"/>
    <property type="match status" value="1"/>
</dbReference>
<dbReference type="Pfam" id="PF00001">
    <property type="entry name" value="7tm_1"/>
    <property type="match status" value="1"/>
</dbReference>
<dbReference type="SUPFAM" id="SSF81321">
    <property type="entry name" value="Family A G protein-coupled receptor-like"/>
    <property type="match status" value="1"/>
</dbReference>
<dbReference type="PROSITE" id="PS50262">
    <property type="entry name" value="G_PROTEIN_RECEP_F1_2"/>
    <property type="match status" value="1"/>
</dbReference>
<proteinExistence type="evidence at transcript level"/>